<keyword id="KW-0021">Allosteric enzyme</keyword>
<keyword id="KW-0963">Cytoplasm</keyword>
<keyword id="KW-0378">Hydrolase</keyword>
<keyword id="KW-0479">Metal-binding</keyword>
<keyword id="KW-0645">Protease</keyword>
<keyword id="KW-0915">Sodium</keyword>
<keyword id="KW-0888">Threonine protease</keyword>
<proteinExistence type="inferred from homology"/>
<organism>
    <name type="scientific">Rickettsia felis (strain ATCC VR-1525 / URRWXCal2)</name>
    <name type="common">Rickettsia azadi</name>
    <dbReference type="NCBI Taxonomy" id="315456"/>
    <lineage>
        <taxon>Bacteria</taxon>
        <taxon>Pseudomonadati</taxon>
        <taxon>Pseudomonadota</taxon>
        <taxon>Alphaproteobacteria</taxon>
        <taxon>Rickettsiales</taxon>
        <taxon>Rickettsiaceae</taxon>
        <taxon>Rickettsieae</taxon>
        <taxon>Rickettsia</taxon>
        <taxon>spotted fever group</taxon>
    </lineage>
</organism>
<protein>
    <recommendedName>
        <fullName evidence="1">ATP-dependent protease subunit HslV</fullName>
        <ecNumber evidence="1">3.4.25.2</ecNumber>
    </recommendedName>
</protein>
<name>HSLV_RICFE</name>
<feature type="chain" id="PRO_0000277985" description="ATP-dependent protease subunit HslV">
    <location>
        <begin position="1"/>
        <end position="182"/>
    </location>
</feature>
<feature type="active site" evidence="1">
    <location>
        <position position="10"/>
    </location>
</feature>
<feature type="binding site" evidence="1">
    <location>
        <position position="166"/>
    </location>
    <ligand>
        <name>Na(+)</name>
        <dbReference type="ChEBI" id="CHEBI:29101"/>
    </ligand>
</feature>
<feature type="binding site" evidence="1">
    <location>
        <position position="169"/>
    </location>
    <ligand>
        <name>Na(+)</name>
        <dbReference type="ChEBI" id="CHEBI:29101"/>
    </ligand>
</feature>
<feature type="binding site" evidence="1">
    <location>
        <position position="172"/>
    </location>
    <ligand>
        <name>Na(+)</name>
        <dbReference type="ChEBI" id="CHEBI:29101"/>
    </ligand>
</feature>
<sequence>MSDNLALHGTTILCLKKNEEIIIAADGQVSHGNTILKSTARKLRTIANNKIIAGFAGSTADGLALFEKLEVKIEQHKHNLLRSAVELAKDWRSDKYLRRLEAMMIVADRNHILILTGNGDVVEPENNVAAIGSGGLFALSAARALMSYENNLTAEEIALKSMNIAADLCVFSNHNIIMEKVV</sequence>
<dbReference type="EC" id="3.4.25.2" evidence="1"/>
<dbReference type="EMBL" id="CP000053">
    <property type="protein sequence ID" value="AAY61366.1"/>
    <property type="molecule type" value="Genomic_DNA"/>
</dbReference>
<dbReference type="SMR" id="Q4UM54"/>
<dbReference type="STRING" id="315456.RF_0515"/>
<dbReference type="KEGG" id="rfe:RF_0515"/>
<dbReference type="eggNOG" id="COG5405">
    <property type="taxonomic scope" value="Bacteria"/>
</dbReference>
<dbReference type="HOGENOM" id="CLU_093872_1_0_5"/>
<dbReference type="OrthoDB" id="9804884at2"/>
<dbReference type="Proteomes" id="UP000008548">
    <property type="component" value="Chromosome"/>
</dbReference>
<dbReference type="GO" id="GO:0009376">
    <property type="term" value="C:HslUV protease complex"/>
    <property type="evidence" value="ECO:0007669"/>
    <property type="project" value="UniProtKB-UniRule"/>
</dbReference>
<dbReference type="GO" id="GO:0005839">
    <property type="term" value="C:proteasome core complex"/>
    <property type="evidence" value="ECO:0007669"/>
    <property type="project" value="InterPro"/>
</dbReference>
<dbReference type="GO" id="GO:0046872">
    <property type="term" value="F:metal ion binding"/>
    <property type="evidence" value="ECO:0007669"/>
    <property type="project" value="UniProtKB-KW"/>
</dbReference>
<dbReference type="GO" id="GO:0004298">
    <property type="term" value="F:threonine-type endopeptidase activity"/>
    <property type="evidence" value="ECO:0007669"/>
    <property type="project" value="UniProtKB-KW"/>
</dbReference>
<dbReference type="GO" id="GO:0051603">
    <property type="term" value="P:proteolysis involved in protein catabolic process"/>
    <property type="evidence" value="ECO:0007669"/>
    <property type="project" value="InterPro"/>
</dbReference>
<dbReference type="CDD" id="cd01913">
    <property type="entry name" value="protease_HslV"/>
    <property type="match status" value="1"/>
</dbReference>
<dbReference type="Gene3D" id="3.60.20.10">
    <property type="entry name" value="Glutamine Phosphoribosylpyrophosphate, subunit 1, domain 1"/>
    <property type="match status" value="1"/>
</dbReference>
<dbReference type="HAMAP" id="MF_00248">
    <property type="entry name" value="HslV"/>
    <property type="match status" value="1"/>
</dbReference>
<dbReference type="InterPro" id="IPR022281">
    <property type="entry name" value="ATP-dep_Prtase_HsIV_su"/>
</dbReference>
<dbReference type="InterPro" id="IPR029055">
    <property type="entry name" value="Ntn_hydrolases_N"/>
</dbReference>
<dbReference type="InterPro" id="IPR001353">
    <property type="entry name" value="Proteasome_sua/b"/>
</dbReference>
<dbReference type="InterPro" id="IPR023333">
    <property type="entry name" value="Proteasome_suB-type"/>
</dbReference>
<dbReference type="NCBIfam" id="TIGR03692">
    <property type="entry name" value="ATP_dep_HslV"/>
    <property type="match status" value="1"/>
</dbReference>
<dbReference type="NCBIfam" id="NF003964">
    <property type="entry name" value="PRK05456.1"/>
    <property type="match status" value="1"/>
</dbReference>
<dbReference type="PANTHER" id="PTHR32194:SF0">
    <property type="entry name" value="ATP-DEPENDENT PROTEASE SUBUNIT HSLV"/>
    <property type="match status" value="1"/>
</dbReference>
<dbReference type="PANTHER" id="PTHR32194">
    <property type="entry name" value="METALLOPROTEASE TLDD"/>
    <property type="match status" value="1"/>
</dbReference>
<dbReference type="Pfam" id="PF00227">
    <property type="entry name" value="Proteasome"/>
    <property type="match status" value="1"/>
</dbReference>
<dbReference type="PIRSF" id="PIRSF039093">
    <property type="entry name" value="HslV"/>
    <property type="match status" value="1"/>
</dbReference>
<dbReference type="SUPFAM" id="SSF56235">
    <property type="entry name" value="N-terminal nucleophile aminohydrolases (Ntn hydrolases)"/>
    <property type="match status" value="1"/>
</dbReference>
<dbReference type="PROSITE" id="PS51476">
    <property type="entry name" value="PROTEASOME_BETA_2"/>
    <property type="match status" value="1"/>
</dbReference>
<reference key="1">
    <citation type="journal article" date="2005" name="PLoS Biol.">
        <title>The genome sequence of Rickettsia felis identifies the first putative conjugative plasmid in an obligate intracellular parasite.</title>
        <authorList>
            <person name="Ogata H."/>
            <person name="Renesto P."/>
            <person name="Audic S."/>
            <person name="Robert C."/>
            <person name="Blanc G."/>
            <person name="Fournier P.-E."/>
            <person name="Parinello H."/>
            <person name="Claverie J.-M."/>
            <person name="Raoult D."/>
        </authorList>
    </citation>
    <scope>NUCLEOTIDE SEQUENCE [LARGE SCALE GENOMIC DNA]</scope>
    <source>
        <strain>ATCC VR-1525 / URRWXCal2</strain>
    </source>
</reference>
<evidence type="ECO:0000255" key="1">
    <source>
        <dbReference type="HAMAP-Rule" id="MF_00248"/>
    </source>
</evidence>
<gene>
    <name evidence="1" type="primary">hslV</name>
    <name type="ordered locus">RF_0515</name>
</gene>
<comment type="function">
    <text evidence="1">Protease subunit of a proteasome-like degradation complex believed to be a general protein degrading machinery.</text>
</comment>
<comment type="catalytic activity">
    <reaction evidence="1">
        <text>ATP-dependent cleavage of peptide bonds with broad specificity.</text>
        <dbReference type="EC" id="3.4.25.2"/>
    </reaction>
</comment>
<comment type="activity regulation">
    <text evidence="1">Allosterically activated by HslU binding.</text>
</comment>
<comment type="subunit">
    <text evidence="1">A double ring-shaped homohexamer of HslV is capped on each side by a ring-shaped HslU homohexamer. The assembly of the HslU/HslV complex is dependent on binding of ATP.</text>
</comment>
<comment type="subcellular location">
    <subcellularLocation>
        <location evidence="1">Cytoplasm</location>
    </subcellularLocation>
</comment>
<comment type="similarity">
    <text evidence="1">Belongs to the peptidase T1B family. HslV subfamily.</text>
</comment>
<accession>Q4UM54</accession>